<organism>
    <name type="scientific">Sinorhizobium fredii (strain NBRC 101917 / NGR234)</name>
    <dbReference type="NCBI Taxonomy" id="394"/>
    <lineage>
        <taxon>Bacteria</taxon>
        <taxon>Pseudomonadati</taxon>
        <taxon>Pseudomonadota</taxon>
        <taxon>Alphaproteobacteria</taxon>
        <taxon>Hyphomicrobiales</taxon>
        <taxon>Rhizobiaceae</taxon>
        <taxon>Sinorhizobium/Ensifer group</taxon>
        <taxon>Sinorhizobium</taxon>
    </lineage>
</organism>
<dbReference type="EMBL" id="U00090">
    <property type="protein sequence ID" value="AAB91634.1"/>
    <property type="molecule type" value="Genomic_DNA"/>
</dbReference>
<dbReference type="PIR" id="T28631">
    <property type="entry name" value="T28631"/>
</dbReference>
<dbReference type="RefSeq" id="NP_443796.1">
    <property type="nucleotide sequence ID" value="NC_000914.2"/>
</dbReference>
<dbReference type="RefSeq" id="WP_010875053.1">
    <property type="nucleotide sequence ID" value="NC_000914.2"/>
</dbReference>
<dbReference type="SMR" id="P55386"/>
<dbReference type="KEGG" id="rhi:NGR_a00100"/>
<dbReference type="PATRIC" id="fig|394.7.peg.9"/>
<dbReference type="eggNOG" id="COG1537">
    <property type="taxonomic scope" value="Bacteria"/>
</dbReference>
<dbReference type="HOGENOM" id="CLU_028733_0_0_5"/>
<dbReference type="OrthoDB" id="9806903at2"/>
<dbReference type="Proteomes" id="UP000001054">
    <property type="component" value="Plasmid pNGR234a"/>
</dbReference>
<dbReference type="GO" id="GO:0007165">
    <property type="term" value="P:signal transduction"/>
    <property type="evidence" value="ECO:0007669"/>
    <property type="project" value="InterPro"/>
</dbReference>
<dbReference type="Gene3D" id="3.40.50.10140">
    <property type="entry name" value="Toll/interleukin-1 receptor homology (TIR) domain"/>
    <property type="match status" value="1"/>
</dbReference>
<dbReference type="InterPro" id="IPR000157">
    <property type="entry name" value="TIR_dom"/>
</dbReference>
<dbReference type="InterPro" id="IPR035897">
    <property type="entry name" value="Toll_tir_struct_dom_sf"/>
</dbReference>
<dbReference type="Pfam" id="PF13676">
    <property type="entry name" value="TIR_2"/>
    <property type="match status" value="1"/>
</dbReference>
<dbReference type="SMART" id="SM00255">
    <property type="entry name" value="TIR"/>
    <property type="match status" value="1"/>
</dbReference>
<dbReference type="SUPFAM" id="SSF52200">
    <property type="entry name" value="Toll/Interleukin receptor TIR domain"/>
    <property type="match status" value="1"/>
</dbReference>
<dbReference type="PROSITE" id="PS50104">
    <property type="entry name" value="TIR"/>
    <property type="match status" value="1"/>
</dbReference>
<evidence type="ECO:0000255" key="1">
    <source>
        <dbReference type="PROSITE-ProRule" id="PRU00204"/>
    </source>
</evidence>
<evidence type="ECO:0000256" key="2">
    <source>
        <dbReference type="SAM" id="MobiDB-lite"/>
    </source>
</evidence>
<protein>
    <recommendedName>
        <fullName>Uncharacterized protein y4cD</fullName>
    </recommendedName>
</protein>
<reference key="1">
    <citation type="journal article" date="1997" name="Nature">
        <title>Molecular basis of symbiosis between Rhizobium and legumes.</title>
        <authorList>
            <person name="Freiberg C.A."/>
            <person name="Fellay R."/>
            <person name="Bairoch A."/>
            <person name="Broughton W.J."/>
            <person name="Rosenthal A."/>
            <person name="Perret X."/>
        </authorList>
    </citation>
    <scope>NUCLEOTIDE SEQUENCE [LARGE SCALE GENOMIC DNA]</scope>
    <source>
        <strain>NBRC 101917 / NGR234</strain>
    </source>
</reference>
<reference key="2">
    <citation type="journal article" date="2009" name="Appl. Environ. Microbiol.">
        <title>Rhizobium sp. strain NGR234 possesses a remarkable number of secretion systems.</title>
        <authorList>
            <person name="Schmeisser C."/>
            <person name="Liesegang H."/>
            <person name="Krysciak D."/>
            <person name="Bakkou N."/>
            <person name="Le Quere A."/>
            <person name="Wollherr A."/>
            <person name="Heinemeyer I."/>
            <person name="Morgenstern B."/>
            <person name="Pommerening-Roeser A."/>
            <person name="Flores M."/>
            <person name="Palacios R."/>
            <person name="Brenner S."/>
            <person name="Gottschalk G."/>
            <person name="Schmitz R.A."/>
            <person name="Broughton W.J."/>
            <person name="Perret X."/>
            <person name="Strittmatter A.W."/>
            <person name="Streit W.R."/>
        </authorList>
    </citation>
    <scope>NUCLEOTIDE SEQUENCE [LARGE SCALE GENOMIC DNA]</scope>
    <source>
        <strain>NBRC 101917 / NGR234</strain>
    </source>
</reference>
<feature type="chain" id="PRO_0000200814" description="Uncharacterized protein y4cD">
    <location>
        <begin position="1"/>
        <end position="640"/>
    </location>
</feature>
<feature type="domain" description="TIR" evidence="1">
    <location>
        <begin position="184"/>
        <end position="328"/>
    </location>
</feature>
<feature type="region of interest" description="Disordered" evidence="2">
    <location>
        <begin position="613"/>
        <end position="640"/>
    </location>
</feature>
<feature type="compositionally biased region" description="Acidic residues" evidence="2">
    <location>
        <begin position="616"/>
        <end position="626"/>
    </location>
</feature>
<geneLocation type="plasmid">
    <name>sym pNGR234a</name>
</geneLocation>
<proteinExistence type="predicted"/>
<name>Y4CD_SINFN</name>
<keyword id="KW-0614">Plasmid</keyword>
<keyword id="KW-1185">Reference proteome</keyword>
<gene>
    <name type="ordered locus">NGR_a00100</name>
    <name type="ORF">y4cD</name>
</gene>
<accession>P55386</accession>
<sequence>MKYDFSTLSPDDFENLSRDLVGAETGVRFEAFTVGADDGMDGRHAKADGSIILQAKHYLRSGFSKLKSKMREERVSIDELAPQRYILTTSVPLTPANKATLTEIIGPSLVGPGDIFGADDLNGLLRSYPEIVKAHEGLWAHSTPVLEEVVTNAVRKAMAPAEVPKTLARLMPPPGAADAPIEPVKRDTIFIIKASPIDDEFTLWLAPKLEAEGYQVFADVLTLMPGERWRREITSALRHRAVKVLLLCRDSSLEDSSIQDDLDIALETGKELGDQRFVIPLRMETFRKIKGLGDTVAVDFVRNWGEGLLKLIDTLQRQKVQRSIDTMINPNWEIYRRRGAVPIIEVPERLTSNWLRVAEAPDFIRYFECSGSINKGRLQGAIDSYGHPCALVGGSGFLAFGGVPEIEMAFEAVGRFKLKHEIPLVEFTEGGFQRLRIDRQIASNLVVAMLKKAWFNYCKRNGFIEHGYSNGIGFHASPEQAPTGKRIPWGNQAEKKRSSMLRNSAKGHIWQFGVTAMPAFWPFWHFKLKSRVLFAQDNDTPAGLVVDDPKKLHRLRRSVCKGWRNKQWYGRLLAFLELLSGESAFVRLPLSETETFVIEASPMLFSSPVSTVLPNDLDDEDEELDDSTLGRPDSDEEGGE</sequence>